<accession>Q9ZWA9</accession>
<accession>Q67ZY3</accession>
<proteinExistence type="evidence at protein level"/>
<reference key="1">
    <citation type="journal article" date="2000" name="Nature">
        <title>Sequence and analysis of chromosome 1 of the plant Arabidopsis thaliana.</title>
        <authorList>
            <person name="Theologis A."/>
            <person name="Ecker J.R."/>
            <person name="Palm C.J."/>
            <person name="Federspiel N.A."/>
            <person name="Kaul S."/>
            <person name="White O."/>
            <person name="Alonso J."/>
            <person name="Altafi H."/>
            <person name="Araujo R."/>
            <person name="Bowman C.L."/>
            <person name="Brooks S.Y."/>
            <person name="Buehler E."/>
            <person name="Chan A."/>
            <person name="Chao Q."/>
            <person name="Chen H."/>
            <person name="Cheuk R.F."/>
            <person name="Chin C.W."/>
            <person name="Chung M.K."/>
            <person name="Conn L."/>
            <person name="Conway A.B."/>
            <person name="Conway A.R."/>
            <person name="Creasy T.H."/>
            <person name="Dewar K."/>
            <person name="Dunn P."/>
            <person name="Etgu P."/>
            <person name="Feldblyum T.V."/>
            <person name="Feng J.-D."/>
            <person name="Fong B."/>
            <person name="Fujii C.Y."/>
            <person name="Gill J.E."/>
            <person name="Goldsmith A.D."/>
            <person name="Haas B."/>
            <person name="Hansen N.F."/>
            <person name="Hughes B."/>
            <person name="Huizar L."/>
            <person name="Hunter J.L."/>
            <person name="Jenkins J."/>
            <person name="Johnson-Hopson C."/>
            <person name="Khan S."/>
            <person name="Khaykin E."/>
            <person name="Kim C.J."/>
            <person name="Koo H.L."/>
            <person name="Kremenetskaia I."/>
            <person name="Kurtz D.B."/>
            <person name="Kwan A."/>
            <person name="Lam B."/>
            <person name="Langin-Hooper S."/>
            <person name="Lee A."/>
            <person name="Lee J.M."/>
            <person name="Lenz C.A."/>
            <person name="Li J.H."/>
            <person name="Li Y.-P."/>
            <person name="Lin X."/>
            <person name="Liu S.X."/>
            <person name="Liu Z.A."/>
            <person name="Luros J.S."/>
            <person name="Maiti R."/>
            <person name="Marziali A."/>
            <person name="Militscher J."/>
            <person name="Miranda M."/>
            <person name="Nguyen M."/>
            <person name="Nierman W.C."/>
            <person name="Osborne B.I."/>
            <person name="Pai G."/>
            <person name="Peterson J."/>
            <person name="Pham P.K."/>
            <person name="Rizzo M."/>
            <person name="Rooney T."/>
            <person name="Rowley D."/>
            <person name="Sakano H."/>
            <person name="Salzberg S.L."/>
            <person name="Schwartz J.R."/>
            <person name="Shinn P."/>
            <person name="Southwick A.M."/>
            <person name="Sun H."/>
            <person name="Tallon L.J."/>
            <person name="Tambunga G."/>
            <person name="Toriumi M.J."/>
            <person name="Town C.D."/>
            <person name="Utterback T."/>
            <person name="Van Aken S."/>
            <person name="Vaysberg M."/>
            <person name="Vysotskaia V.S."/>
            <person name="Walker M."/>
            <person name="Wu D."/>
            <person name="Yu G."/>
            <person name="Fraser C.M."/>
            <person name="Venter J.C."/>
            <person name="Davis R.W."/>
        </authorList>
    </citation>
    <scope>NUCLEOTIDE SEQUENCE [LARGE SCALE GENOMIC DNA]</scope>
    <source>
        <strain>cv. Columbia</strain>
    </source>
</reference>
<reference key="2">
    <citation type="journal article" date="2017" name="Plant J.">
        <title>Araport11: a complete reannotation of the Arabidopsis thaliana reference genome.</title>
        <authorList>
            <person name="Cheng C.Y."/>
            <person name="Krishnakumar V."/>
            <person name="Chan A.P."/>
            <person name="Thibaud-Nissen F."/>
            <person name="Schobel S."/>
            <person name="Town C.D."/>
        </authorList>
    </citation>
    <scope>GENOME REANNOTATION</scope>
    <source>
        <strain>cv. Columbia</strain>
    </source>
</reference>
<reference key="3">
    <citation type="journal article" date="2003" name="Science">
        <title>Empirical analysis of transcriptional activity in the Arabidopsis genome.</title>
        <authorList>
            <person name="Yamada K."/>
            <person name="Lim J."/>
            <person name="Dale J.M."/>
            <person name="Chen H."/>
            <person name="Shinn P."/>
            <person name="Palm C.J."/>
            <person name="Southwick A.M."/>
            <person name="Wu H.C."/>
            <person name="Kim C.J."/>
            <person name="Nguyen M."/>
            <person name="Pham P.K."/>
            <person name="Cheuk R.F."/>
            <person name="Karlin-Newmann G."/>
            <person name="Liu S.X."/>
            <person name="Lam B."/>
            <person name="Sakano H."/>
            <person name="Wu T."/>
            <person name="Yu G."/>
            <person name="Miranda M."/>
            <person name="Quach H.L."/>
            <person name="Tripp M."/>
            <person name="Chang C.H."/>
            <person name="Lee J.M."/>
            <person name="Toriumi M.J."/>
            <person name="Chan M.M."/>
            <person name="Tang C.C."/>
            <person name="Onodera C.S."/>
            <person name="Deng J.M."/>
            <person name="Akiyama K."/>
            <person name="Ansari Y."/>
            <person name="Arakawa T."/>
            <person name="Banh J."/>
            <person name="Banno F."/>
            <person name="Bowser L."/>
            <person name="Brooks S.Y."/>
            <person name="Carninci P."/>
            <person name="Chao Q."/>
            <person name="Choy N."/>
            <person name="Enju A."/>
            <person name="Goldsmith A.D."/>
            <person name="Gurjal M."/>
            <person name="Hansen N.F."/>
            <person name="Hayashizaki Y."/>
            <person name="Johnson-Hopson C."/>
            <person name="Hsuan V.W."/>
            <person name="Iida K."/>
            <person name="Karnes M."/>
            <person name="Khan S."/>
            <person name="Koesema E."/>
            <person name="Ishida J."/>
            <person name="Jiang P.X."/>
            <person name="Jones T."/>
            <person name="Kawai J."/>
            <person name="Kamiya A."/>
            <person name="Meyers C."/>
            <person name="Nakajima M."/>
            <person name="Narusaka M."/>
            <person name="Seki M."/>
            <person name="Sakurai T."/>
            <person name="Satou M."/>
            <person name="Tamse R."/>
            <person name="Vaysberg M."/>
            <person name="Wallender E.K."/>
            <person name="Wong C."/>
            <person name="Yamamura Y."/>
            <person name="Yuan S."/>
            <person name="Shinozaki K."/>
            <person name="Davis R.W."/>
            <person name="Theologis A."/>
            <person name="Ecker J.R."/>
        </authorList>
    </citation>
    <scope>NUCLEOTIDE SEQUENCE [LARGE SCALE MRNA]</scope>
    <source>
        <strain>cv. Columbia</strain>
    </source>
</reference>
<reference key="4">
    <citation type="journal article" date="2002" name="Plant Cell">
        <title>Redundant proteolytic mechanisms process seed storage proteins in the absence of seed-type members of the vacuolar processing enzyme family of cysteine proteases.</title>
        <authorList>
            <person name="Gruis D.F."/>
            <person name="Selinger D.A."/>
            <person name="Curran J.M."/>
            <person name="Jung R."/>
        </authorList>
    </citation>
    <scope>PROTEIN SEQUENCE OF 26-32</scope>
    <scope>PROTEIN SEQUENCE OF N-TERMINUS</scope>
    <scope>IDENTIFICATION BY MASS SPECTROMETRY</scope>
    <scope>TISSUE SPECIFICITY</scope>
</reference>
<reference key="5">
    <citation type="journal article" date="2004" name="Plant Cell">
        <title>Storage protein accumulation in the absence of the vacuolar processing enzyme family of cysteine proteases.</title>
        <authorList>
            <person name="Gruis D."/>
            <person name="Schulze J."/>
            <person name="Jung R."/>
        </authorList>
    </citation>
    <scope>PROTEIN SEQUENCE OF 26-33</scope>
    <scope>PROTEIN SEQUENCE OF N-TERMINUS</scope>
    <scope>PROTEOLYSIS</scope>
</reference>
<reference key="6">
    <citation type="submission" date="2004-09" db="EMBL/GenBank/DDBJ databases">
        <title>Large-scale analysis of RIKEN Arabidopsis full-length (RAFL) cDNAs.</title>
        <authorList>
            <person name="Totoki Y."/>
            <person name="Seki M."/>
            <person name="Ishida J."/>
            <person name="Nakajima M."/>
            <person name="Enju A."/>
            <person name="Kamiya A."/>
            <person name="Narusaka M."/>
            <person name="Shin-i T."/>
            <person name="Nakagawa M."/>
            <person name="Sakamoto N."/>
            <person name="Oishi K."/>
            <person name="Kohara Y."/>
            <person name="Kobayashi M."/>
            <person name="Toyoda A."/>
            <person name="Sakaki Y."/>
            <person name="Sakurai T."/>
            <person name="Iida K."/>
            <person name="Akiyama K."/>
            <person name="Satou M."/>
            <person name="Toyoda T."/>
            <person name="Konagaya A."/>
            <person name="Carninci P."/>
            <person name="Kawai J."/>
            <person name="Hayashizaki Y."/>
            <person name="Shinozaki K."/>
        </authorList>
    </citation>
    <scope>NUCLEOTIDE SEQUENCE [LARGE SCALE MRNA] OF 381-451</scope>
    <source>
        <strain>cv. Columbia</strain>
    </source>
</reference>
<reference key="7">
    <citation type="journal article" date="2007" name="Biochem. J.">
        <title>Phosphorylation of the 12 S globulin cruciferin in wild-type and abi1-1 mutant Arabidopsis thaliana (thale cress) seeds.</title>
        <authorList>
            <person name="Wan L."/>
            <person name="Ross A.R."/>
            <person name="Yang J."/>
            <person name="Hegedus D.D."/>
            <person name="Kermode A.R."/>
        </authorList>
    </citation>
    <scope>IDENTIFICATION BY MASS SPECTROMETRY</scope>
    <scope>PHOSPHORYLATION AT SER-39</scope>
    <scope>NOMENCLATURE</scope>
</reference>
<reference key="8">
    <citation type="journal article" date="2007" name="J. Biochem. Mol. Biol.">
        <title>Systematic studies of 12S seed storage protein accumulation and degradation patterns during Arabidopsis seed maturation and early seedling germination stages.</title>
        <authorList>
            <person name="Li Q."/>
            <person name="Wang B.-C."/>
            <person name="Xu Y."/>
            <person name="Zhu Y.-X."/>
        </authorList>
    </citation>
    <scope>PROTEOLYSIS</scope>
    <scope>DEVELOPMENTAL STAGE</scope>
    <scope>TISSUE SPECIFICITY</scope>
</reference>
<dbReference type="EMBL" id="AC003027">
    <property type="protein sequence ID" value="AAD10679.1"/>
    <property type="molecule type" value="Genomic_DNA"/>
</dbReference>
<dbReference type="EMBL" id="CP002684">
    <property type="protein sequence ID" value="AEE27629.1"/>
    <property type="molecule type" value="Genomic_DNA"/>
</dbReference>
<dbReference type="EMBL" id="AY065432">
    <property type="protein sequence ID" value="AAL38873.1"/>
    <property type="molecule type" value="mRNA"/>
</dbReference>
<dbReference type="EMBL" id="AY117228">
    <property type="protein sequence ID" value="AAM51303.1"/>
    <property type="molecule type" value="mRNA"/>
</dbReference>
<dbReference type="EMBL" id="AK175984">
    <property type="protein sequence ID" value="BAD43747.1"/>
    <property type="molecule type" value="mRNA"/>
</dbReference>
<dbReference type="PIR" id="F86169">
    <property type="entry name" value="F86169"/>
</dbReference>
<dbReference type="RefSeq" id="NP_171885.1">
    <property type="nucleotide sequence ID" value="NM_100269.4"/>
</dbReference>
<dbReference type="SMR" id="Q9ZWA9"/>
<dbReference type="FunCoup" id="Q9ZWA9">
    <property type="interactions" value="33"/>
</dbReference>
<dbReference type="STRING" id="3702.Q9ZWA9"/>
<dbReference type="iPTMnet" id="Q9ZWA9"/>
<dbReference type="PaxDb" id="3702-AT1G03890.1"/>
<dbReference type="ProteomicsDB" id="222727"/>
<dbReference type="EnsemblPlants" id="AT1G03890.1">
    <property type="protein sequence ID" value="AT1G03890.1"/>
    <property type="gene ID" value="AT1G03890"/>
</dbReference>
<dbReference type="GeneID" id="839379"/>
<dbReference type="Gramene" id="AT1G03890.1">
    <property type="protein sequence ID" value="AT1G03890.1"/>
    <property type="gene ID" value="AT1G03890"/>
</dbReference>
<dbReference type="KEGG" id="ath:AT1G03890"/>
<dbReference type="Araport" id="AT1G03890"/>
<dbReference type="TAIR" id="AT1G03890"/>
<dbReference type="eggNOG" id="ENOG502QU1J">
    <property type="taxonomic scope" value="Eukaryota"/>
</dbReference>
<dbReference type="HOGENOM" id="CLU_026341_2_0_1"/>
<dbReference type="InParanoid" id="Q9ZWA9"/>
<dbReference type="OMA" id="MHQKLEN"/>
<dbReference type="PhylomeDB" id="Q9ZWA9"/>
<dbReference type="PRO" id="PR:Q9ZWA9"/>
<dbReference type="Proteomes" id="UP000006548">
    <property type="component" value="Chromosome 1"/>
</dbReference>
<dbReference type="ExpressionAtlas" id="Q9ZWA9">
    <property type="expression patterns" value="baseline and differential"/>
</dbReference>
<dbReference type="GO" id="GO:0000326">
    <property type="term" value="C:protein storage vacuole"/>
    <property type="evidence" value="ECO:0007669"/>
    <property type="project" value="UniProtKB-SubCell"/>
</dbReference>
<dbReference type="GO" id="GO:0045735">
    <property type="term" value="F:nutrient reservoir activity"/>
    <property type="evidence" value="ECO:0000314"/>
    <property type="project" value="UniProtKB"/>
</dbReference>
<dbReference type="GO" id="GO:0010431">
    <property type="term" value="P:seed maturation"/>
    <property type="evidence" value="ECO:0000314"/>
    <property type="project" value="UniProtKB"/>
</dbReference>
<dbReference type="CDD" id="cd02243">
    <property type="entry name" value="cupin_11S_legumin_C"/>
    <property type="match status" value="1"/>
</dbReference>
<dbReference type="CDD" id="cd02242">
    <property type="entry name" value="cupin_11S_legumin_N"/>
    <property type="match status" value="1"/>
</dbReference>
<dbReference type="FunFam" id="2.60.120.10:FF:000073">
    <property type="entry name" value="Glycinin G1"/>
    <property type="match status" value="1"/>
</dbReference>
<dbReference type="Gene3D" id="2.60.120.10">
    <property type="entry name" value="Jelly Rolls"/>
    <property type="match status" value="2"/>
</dbReference>
<dbReference type="InterPro" id="IPR006044">
    <property type="entry name" value="11S_seedstore_pln"/>
</dbReference>
<dbReference type="InterPro" id="IPR006045">
    <property type="entry name" value="Cupin_1"/>
</dbReference>
<dbReference type="InterPro" id="IPR014710">
    <property type="entry name" value="RmlC-like_jellyroll"/>
</dbReference>
<dbReference type="InterPro" id="IPR011051">
    <property type="entry name" value="RmlC_Cupin_sf"/>
</dbReference>
<dbReference type="InterPro" id="IPR050253">
    <property type="entry name" value="Seed_Storage-Functional"/>
</dbReference>
<dbReference type="PANTHER" id="PTHR31189:SF38">
    <property type="entry name" value="12S SEED STORAGE PROTEIN CRD"/>
    <property type="match status" value="1"/>
</dbReference>
<dbReference type="PANTHER" id="PTHR31189">
    <property type="entry name" value="OS03G0336100 PROTEIN-RELATED"/>
    <property type="match status" value="1"/>
</dbReference>
<dbReference type="Pfam" id="PF00190">
    <property type="entry name" value="Cupin_1"/>
    <property type="match status" value="2"/>
</dbReference>
<dbReference type="PRINTS" id="PR00439">
    <property type="entry name" value="11SGLOBULIN"/>
</dbReference>
<dbReference type="SMART" id="SM00835">
    <property type="entry name" value="Cupin_1"/>
    <property type="match status" value="2"/>
</dbReference>
<dbReference type="SUPFAM" id="SSF51182">
    <property type="entry name" value="RmlC-like cupins"/>
    <property type="match status" value="1"/>
</dbReference>
<organism>
    <name type="scientific">Arabidopsis thaliana</name>
    <name type="common">Mouse-ear cress</name>
    <dbReference type="NCBI Taxonomy" id="3702"/>
    <lineage>
        <taxon>Eukaryota</taxon>
        <taxon>Viridiplantae</taxon>
        <taxon>Streptophyta</taxon>
        <taxon>Embryophyta</taxon>
        <taxon>Tracheophyta</taxon>
        <taxon>Spermatophyta</taxon>
        <taxon>Magnoliopsida</taxon>
        <taxon>eudicotyledons</taxon>
        <taxon>Gunneridae</taxon>
        <taxon>Pentapetalae</taxon>
        <taxon>rosids</taxon>
        <taxon>malvids</taxon>
        <taxon>Brassicales</taxon>
        <taxon>Brassicaceae</taxon>
        <taxon>Camelineae</taxon>
        <taxon>Arabidopsis</taxon>
    </lineage>
</organism>
<name>CRU4_ARATH</name>
<protein>
    <recommendedName>
        <fullName>12S seed storage protein CRD</fullName>
    </recommendedName>
    <alternativeName>
        <fullName>Cruciferin D</fullName>
    </alternativeName>
    <alternativeName>
        <fullName>Legumin-type globulin storage protein CRD</fullName>
    </alternativeName>
    <component>
        <recommendedName>
            <fullName>12S seed storage protein CRD alpha chain</fullName>
        </recommendedName>
        <alternativeName>
            <fullName>12S seed storage protein CRD acidic chain</fullName>
        </alternativeName>
    </component>
    <component>
        <recommendedName>
            <fullName>12S seed storage protein CRD beta chain</fullName>
        </recommendedName>
        <alternativeName>
            <fullName>12S seed storage protein CRD basic chain</fullName>
        </alternativeName>
    </component>
</protein>
<gene>
    <name type="primary">CRD</name>
    <name type="synonym">CRU2</name>
    <name type="ordered locus">At1g03890</name>
    <name type="ORF">F21M11.18</name>
</gene>
<sequence length="451" mass="49675">MHKLLFSLLSVVSLSFLLFFHGAEARQREAPFPNACHFSQINSLAPAQATKFEAGQMEVWDHMSPELRCAGVTVARITLQPNSIFLPAFFSPPALAYVVQGEGVMGTIASGCPETFAEVEGSSGRGGGGDPGRRFEDMHQKLENFRRGDVFASLAGVSQWWYNRGDSDAVIVIVLDVTNRENQLDQVPRMFQLAGSRTQEEEQPLTWPSGNNAFSGFDPNIIAEAFKINIETAKQLQNQKDNRGNIIRANGPLHFVIPPPREWQQDGIANGIEETYCTAKIHENIDDPERSDHFSTRAGRISTLNSLNLPVLRLVRLNALRGYLYSGGMVLPQWTANAHTVLYVTGGQAKIQVVDDNGQSVFNEQVGQGQIIVIPQGFAVSKTAGETGFEWISFKTNDNAYINTLSGQTSYLRAVPVDVIKASYGVNEEEAKRIKFSQQETMLSMTPSSSS</sequence>
<keyword id="KW-0903">Direct protein sequencing</keyword>
<keyword id="KW-1015">Disulfide bond</keyword>
<keyword id="KW-0597">Phosphoprotein</keyword>
<keyword id="KW-1185">Reference proteome</keyword>
<keyword id="KW-0708">Seed storage protein</keyword>
<keyword id="KW-0732">Signal</keyword>
<keyword id="KW-0758">Storage protein</keyword>
<keyword id="KW-0832">Ubl conjugation</keyword>
<keyword id="KW-0926">Vacuole</keyword>
<comment type="function">
    <text>Seed storage protein.</text>
</comment>
<comment type="subunit">
    <text>Hexamer; each subunit is composed of an acidic and a basic chain derived from a single precursor and linked by a disulfide bond.</text>
</comment>
<comment type="subcellular location">
    <subcellularLocation>
        <location evidence="9">Protein storage vacuole</location>
    </subcellularLocation>
</comment>
<comment type="tissue specificity">
    <text evidence="5 8">Accumulates in seeds 8 days after anthesis.</text>
</comment>
<comment type="developmental stage">
    <text evidence="8">First observed in siliques 15 days post anthesis and accumulates progressively as native isoforms or proteolytic fragments during the last week of seed maturation/desiccation. Present in dry seeds, but disappears during their germination (at protein level).</text>
</comment>
<comment type="PTM">
    <text evidence="1">Ubiquitinated.</text>
</comment>
<comment type="PTM">
    <text>Proteolytically processed during seed maturation at a conserved Asn-Gly peptide bond by an asparaginyl endopeptidase to produce two mature polypeptides referred to as alpha and beta subunits that are joined together by a disulfide bond.</text>
</comment>
<comment type="PTM">
    <text evidence="1">Phosphorylated in seeds on some Tyr residues in response to abscisic acid (ABA).</text>
</comment>
<comment type="similarity">
    <text evidence="9">Belongs to the 11S seed storage protein (globulins) family.</text>
</comment>
<evidence type="ECO:0000250" key="1"/>
<evidence type="ECO:0000250" key="2">
    <source>
        <dbReference type="UniProtKB" id="P15455"/>
    </source>
</evidence>
<evidence type="ECO:0000250" key="3">
    <source>
        <dbReference type="UniProtKB" id="P15456"/>
    </source>
</evidence>
<evidence type="ECO:0000255" key="4"/>
<evidence type="ECO:0000269" key="5">
    <source>
    </source>
</evidence>
<evidence type="ECO:0000269" key="6">
    <source>
    </source>
</evidence>
<evidence type="ECO:0000269" key="7">
    <source>
    </source>
</evidence>
<evidence type="ECO:0000269" key="8">
    <source>
    </source>
</evidence>
<evidence type="ECO:0000305" key="9"/>
<feature type="signal peptide" evidence="5 6">
    <location>
        <begin position="1"/>
        <end position="25"/>
    </location>
</feature>
<feature type="chain" id="PRO_0000399925" description="12S seed storage protein CRD alpha chain">
    <location>
        <begin position="27"/>
        <end position="270"/>
    </location>
</feature>
<feature type="chain" id="PRO_0000399926" description="12S seed storage protein CRD beta chain">
    <location>
        <begin position="271"/>
        <end position="451"/>
    </location>
</feature>
<feature type="domain" description="Cupin type-1 1" evidence="4">
    <location>
        <begin position="42"/>
        <end position="234"/>
    </location>
</feature>
<feature type="domain" description="Cupin type-1 2" evidence="4">
    <location>
        <begin position="283"/>
        <end position="432"/>
    </location>
</feature>
<feature type="modified residue" description="Phosphoserine" evidence="7">
    <location>
        <position position="39"/>
    </location>
</feature>
<feature type="modified residue" description="Phosphothreonine" evidence="2">
    <location>
        <position position="115"/>
    </location>
</feature>
<feature type="modified residue" description="Phosphoserine" evidence="2">
    <location>
        <position position="302"/>
    </location>
</feature>
<feature type="modified residue" description="Phosphothreonine" evidence="3">
    <location>
        <position position="396"/>
    </location>
</feature>
<feature type="modified residue" description="Phosphoserine" evidence="3">
    <location>
        <position position="437"/>
    </location>
</feature>
<feature type="disulfide bond" evidence="1">
    <location>
        <begin position="36"/>
        <end position="69"/>
    </location>
</feature>
<feature type="disulfide bond" description="Interchain (between alpha and beta chains)" evidence="4">
    <location>
        <begin position="112"/>
        <end position="277"/>
    </location>
</feature>
<feature type="sequence conflict" description="In Ref. 6; BAD43747." evidence="9" ref="6">
    <original>K</original>
    <variation>R</variation>
    <location>
        <position position="382"/>
    </location>
</feature>